<keyword id="KW-0002">3D-structure</keyword>
<keyword id="KW-0068">Autocatalytic cleavage</keyword>
<keyword id="KW-0903">Direct protein sequencing</keyword>
<keyword id="KW-0260">Enterotoxin</keyword>
<keyword id="KW-0328">Glycosyltransferase</keyword>
<keyword id="KW-1032">Host cell membrane</keyword>
<keyword id="KW-1035">Host cytoplasm</keyword>
<keyword id="KW-1039">Host endosome</keyword>
<keyword id="KW-1043">Host membrane</keyword>
<keyword id="KW-0378">Hydrolase</keyword>
<keyword id="KW-0446">Lipid-binding</keyword>
<keyword id="KW-0460">Magnesium</keyword>
<keyword id="KW-0464">Manganese</keyword>
<keyword id="KW-0472">Membrane</keyword>
<keyword id="KW-0479">Metal-binding</keyword>
<keyword id="KW-0645">Protease</keyword>
<keyword id="KW-0677">Repeat</keyword>
<keyword id="KW-0964">Secreted</keyword>
<keyword id="KW-0788">Thiol protease</keyword>
<keyword id="KW-0800">Toxin</keyword>
<keyword id="KW-0808">Transferase</keyword>
<keyword id="KW-0843">Virulence</keyword>
<keyword id="KW-0862">Zinc</keyword>
<organism>
    <name type="scientific">Clostridioides difficile</name>
    <name type="common">Peptoclostridium difficile</name>
    <dbReference type="NCBI Taxonomy" id="1496"/>
    <lineage>
        <taxon>Bacteria</taxon>
        <taxon>Bacillati</taxon>
        <taxon>Bacillota</taxon>
        <taxon>Clostridia</taxon>
        <taxon>Peptostreptococcales</taxon>
        <taxon>Peptostreptococcaceae</taxon>
        <taxon>Clostridioides</taxon>
    </lineage>
</organism>
<feature type="initiator methionine" description="Removed" evidence="7">
    <location>
        <position position="1"/>
    </location>
</feature>
<feature type="chain" id="PRO_0000451195" description="Toxin B">
    <location>
        <begin position="2"/>
        <end position="2367"/>
    </location>
</feature>
<feature type="chain" id="PRO_0000451196" description="Glucosyltransferase TcdB" evidence="10">
    <location>
        <begin position="2"/>
        <end position="544"/>
    </location>
</feature>
<feature type="domain" description="GT44" evidence="4">
    <location>
        <begin position="96"/>
        <end position="469"/>
    </location>
</feature>
<feature type="domain" description="Peptidase C80" evidence="6">
    <location>
        <begin position="568"/>
        <end position="775"/>
    </location>
</feature>
<feature type="repeat" description="Cell wall-binding 1" evidence="5">
    <location>
        <begin position="1833"/>
        <end position="1852"/>
    </location>
</feature>
<feature type="repeat" description="Cell wall-binding 2" evidence="5">
    <location>
        <begin position="1854"/>
        <end position="1873"/>
    </location>
</feature>
<feature type="repeat" description="Cell wall-binding 3" evidence="5">
    <location>
        <begin position="1876"/>
        <end position="1895"/>
    </location>
</feature>
<feature type="repeat" description="Cell wall-binding 4" evidence="5">
    <location>
        <begin position="1926"/>
        <end position="1945"/>
    </location>
</feature>
<feature type="repeat" description="Cell wall-binding 5" evidence="5">
    <location>
        <begin position="1946"/>
        <end position="1965"/>
    </location>
</feature>
<feature type="repeat" description="Cell wall-binding 6" evidence="5">
    <location>
        <begin position="1967"/>
        <end position="1986"/>
    </location>
</feature>
<feature type="repeat" description="Cell wall-binding 7" evidence="5">
    <location>
        <begin position="1987"/>
        <end position="2006"/>
    </location>
</feature>
<feature type="repeat" description="Cell wall-binding 8" evidence="5">
    <location>
        <begin position="2007"/>
        <end position="2026"/>
    </location>
</feature>
<feature type="repeat" description="Cell wall-binding 9" evidence="5">
    <location>
        <begin position="2057"/>
        <end position="2076"/>
    </location>
</feature>
<feature type="repeat" description="Cell wall-binding 10" evidence="5">
    <location>
        <begin position="2077"/>
        <end position="2097"/>
    </location>
</feature>
<feature type="repeat" description="Cell wall-binding 11" evidence="5">
    <location>
        <begin position="2099"/>
        <end position="2118"/>
    </location>
</feature>
<feature type="repeat" description="Cell wall-binding 12" evidence="5">
    <location>
        <begin position="2119"/>
        <end position="2138"/>
    </location>
</feature>
<feature type="repeat" description="Cell wall-binding 13" evidence="5">
    <location>
        <begin position="2139"/>
        <end position="2158"/>
    </location>
</feature>
<feature type="repeat" description="Cell wall-binding 14" evidence="5">
    <location>
        <begin position="2209"/>
        <end position="2231"/>
    </location>
</feature>
<feature type="repeat" description="Cell wall-binding 15" evidence="5">
    <location>
        <begin position="2233"/>
        <end position="2252"/>
    </location>
</feature>
<feature type="repeat" description="Cell wall-binding 16" evidence="5">
    <location>
        <begin position="2253"/>
        <end position="2272"/>
    </location>
</feature>
<feature type="repeat" description="Cell wall-binding 17" evidence="5">
    <location>
        <begin position="2273"/>
        <end position="2292"/>
    </location>
</feature>
<feature type="repeat" description="Cell wall-binding 18" evidence="5">
    <location>
        <begin position="2323"/>
        <end position="2342"/>
    </location>
</feature>
<feature type="repeat" description="Cell wall-binding 19" evidence="5">
    <location>
        <begin position="2343"/>
        <end position="2362"/>
    </location>
</feature>
<feature type="region of interest" description="Four-helical bundle" evidence="3">
    <location>
        <begin position="2"/>
        <end position="91"/>
    </location>
</feature>
<feature type="region of interest" description="Glucosyltransferase region" evidence="2">
    <location>
        <begin position="96"/>
        <end position="469"/>
    </location>
</feature>
<feature type="region of interest" description="Autoprocessing region" evidence="2">
    <location>
        <begin position="545"/>
        <end position="800"/>
    </location>
</feature>
<feature type="region of interest" description="Translocation region" evidence="2">
    <location>
        <begin position="801"/>
        <end position="1501"/>
    </location>
</feature>
<feature type="region of interest" description="Interaction with host frizzled receptors FZD1, FZD2 and FZD7" evidence="2">
    <location>
        <begin position="1434"/>
        <end position="1439"/>
    </location>
</feature>
<feature type="region of interest" description="Interaction with host frizzled receptors FZD1, FZD2 and FZD7" evidence="2">
    <location>
        <begin position="1487"/>
        <end position="1512"/>
    </location>
</feature>
<feature type="region of interest" description="Interaction with host frizzled receptors FZD1, FZD2 and FZD7" evidence="2">
    <location>
        <begin position="1598"/>
        <end position="1600"/>
    </location>
</feature>
<feature type="region of interest" description="Receptor-binding (CROPS) region" evidence="2">
    <location>
        <begin position="1835"/>
        <end position="2367"/>
    </location>
</feature>
<feature type="active site" description="For protease activity" evidence="6">
    <location>
        <position position="654"/>
    </location>
</feature>
<feature type="active site" description="Nucleophile; for protease activity" evidence="6">
    <location>
        <position position="699"/>
    </location>
</feature>
<feature type="binding site" evidence="2">
    <location>
        <begin position="101"/>
        <end position="103"/>
    </location>
    <ligand>
        <name>UDP-alpha-D-glucose</name>
        <dbReference type="ChEBI" id="CHEBI:58885"/>
    </ligand>
</feature>
<feature type="binding site" evidence="2">
    <location>
        <position position="139"/>
    </location>
    <ligand>
        <name>UDP-alpha-D-glucose</name>
        <dbReference type="ChEBI" id="CHEBI:58885"/>
    </ligand>
</feature>
<feature type="binding site" evidence="2">
    <location>
        <begin position="269"/>
        <end position="273"/>
    </location>
    <ligand>
        <name>UDP-alpha-D-glucose</name>
        <dbReference type="ChEBI" id="CHEBI:58885"/>
    </ligand>
</feature>
<feature type="binding site" evidence="2">
    <location>
        <begin position="286"/>
        <end position="288"/>
    </location>
    <ligand>
        <name>UDP-alpha-D-glucose</name>
        <dbReference type="ChEBI" id="CHEBI:58885"/>
    </ligand>
</feature>
<feature type="binding site" evidence="2">
    <location>
        <position position="286"/>
    </location>
    <ligand>
        <name>Mg(2+)</name>
        <dbReference type="ChEBI" id="CHEBI:18420"/>
    </ligand>
</feature>
<feature type="binding site" evidence="2">
    <location>
        <position position="288"/>
    </location>
    <ligand>
        <name>Mg(2+)</name>
        <dbReference type="ChEBI" id="CHEBI:18420"/>
    </ligand>
</feature>
<feature type="binding site" evidence="2">
    <location>
        <position position="516"/>
    </location>
    <ligand>
        <name>Mg(2+)</name>
        <dbReference type="ChEBI" id="CHEBI:18420"/>
    </ligand>
</feature>
<feature type="binding site" evidence="2">
    <location>
        <begin position="519"/>
        <end position="521"/>
    </location>
    <ligand>
        <name>UDP-alpha-D-glucose</name>
        <dbReference type="ChEBI" id="CHEBI:58885"/>
    </ligand>
</feature>
<feature type="binding site" evidence="2">
    <location>
        <position position="546"/>
    </location>
    <ligand>
        <name>Zn(2+)</name>
        <dbReference type="ChEBI" id="CHEBI:29105"/>
    </ligand>
</feature>
<feature type="binding site" evidence="2">
    <location>
        <position position="547"/>
    </location>
    <ligand>
        <name>Zn(2+)</name>
        <dbReference type="ChEBI" id="CHEBI:29105"/>
    </ligand>
</feature>
<feature type="binding site" evidence="1">
    <location>
        <position position="578"/>
    </location>
    <ligand>
        <name>1D-myo-inositol hexakisphosphate</name>
        <dbReference type="ChEBI" id="CHEBI:58130"/>
    </ligand>
</feature>
<feature type="binding site" evidence="1">
    <location>
        <position position="601"/>
    </location>
    <ligand>
        <name>1D-myo-inositol hexakisphosphate</name>
        <dbReference type="ChEBI" id="CHEBI:58130"/>
    </ligand>
</feature>
<feature type="binding site" evidence="1">
    <location>
        <position position="648"/>
    </location>
    <ligand>
        <name>1D-myo-inositol hexakisphosphate</name>
        <dbReference type="ChEBI" id="CHEBI:58130"/>
    </ligand>
</feature>
<feature type="binding site" evidence="2">
    <location>
        <position position="654"/>
    </location>
    <ligand>
        <name>Zn(2+)</name>
        <dbReference type="ChEBI" id="CHEBI:29105"/>
    </ligand>
</feature>
<feature type="binding site" evidence="2">
    <location>
        <position position="758"/>
    </location>
    <ligand>
        <name>Zn(2+)</name>
        <dbReference type="ChEBI" id="CHEBI:29105"/>
    </ligand>
</feature>
<feature type="binding site" evidence="1">
    <location>
        <position position="765"/>
    </location>
    <ligand>
        <name>1D-myo-inositol hexakisphosphate</name>
        <dbReference type="ChEBI" id="CHEBI:58130"/>
    </ligand>
</feature>
<feature type="binding site" evidence="1">
    <location>
        <position position="776"/>
    </location>
    <ligand>
        <name>1D-myo-inositol hexakisphosphate</name>
        <dbReference type="ChEBI" id="CHEBI:58130"/>
    </ligand>
</feature>
<feature type="binding site" evidence="1">
    <location>
        <position position="793"/>
    </location>
    <ligand>
        <name>1D-myo-inositol hexakisphosphate</name>
        <dbReference type="ChEBI" id="CHEBI:58130"/>
    </ligand>
</feature>
<feature type="site" description="Cleavage; by autolysis" evidence="7">
    <location>
        <begin position="544"/>
        <end position="545"/>
    </location>
</feature>
<feature type="sequence conflict" description="In Ref. 1; CAC79962." evidence="9" ref="1">
    <original>L</original>
    <variation>S</variation>
    <location>
        <position position="3"/>
    </location>
</feature>
<feature type="helix" evidence="11">
    <location>
        <begin position="6"/>
        <end position="12"/>
    </location>
</feature>
<feature type="helix" evidence="11">
    <location>
        <begin position="22"/>
        <end position="34"/>
    </location>
</feature>
<feature type="helix" evidence="11">
    <location>
        <begin position="42"/>
        <end position="62"/>
    </location>
</feature>
<feature type="turn" evidence="13">
    <location>
        <begin position="63"/>
        <end position="65"/>
    </location>
</feature>
<feature type="strand" evidence="13">
    <location>
        <begin position="66"/>
        <end position="68"/>
    </location>
</feature>
<feature type="helix" evidence="11">
    <location>
        <begin position="69"/>
        <end position="89"/>
    </location>
</feature>
<feature type="strand" evidence="11">
    <location>
        <begin position="96"/>
        <end position="101"/>
    </location>
</feature>
<feature type="helix" evidence="11">
    <location>
        <begin position="109"/>
        <end position="121"/>
    </location>
</feature>
<feature type="turn" evidence="13">
    <location>
        <begin position="122"/>
        <end position="124"/>
    </location>
</feature>
<feature type="strand" evidence="11">
    <location>
        <begin position="125"/>
        <end position="131"/>
    </location>
</feature>
<feature type="helix" evidence="11">
    <location>
        <begin position="138"/>
        <end position="155"/>
    </location>
</feature>
<feature type="turn" evidence="11">
    <location>
        <begin position="156"/>
        <end position="162"/>
    </location>
</feature>
<feature type="strand" evidence="11">
    <location>
        <begin position="163"/>
        <end position="167"/>
    </location>
</feature>
<feature type="helix" evidence="11">
    <location>
        <begin position="168"/>
        <end position="196"/>
    </location>
</feature>
<feature type="helix" evidence="11">
    <location>
        <begin position="202"/>
        <end position="214"/>
    </location>
</feature>
<feature type="helix" evidence="11">
    <location>
        <begin position="218"/>
        <end position="233"/>
    </location>
</feature>
<feature type="turn" evidence="11">
    <location>
        <begin position="234"/>
        <end position="236"/>
    </location>
</feature>
<feature type="strand" evidence="11">
    <location>
        <begin position="237"/>
        <end position="239"/>
    </location>
</feature>
<feature type="helix" evidence="11">
    <location>
        <begin position="240"/>
        <end position="242"/>
    </location>
</feature>
<feature type="helix" evidence="11">
    <location>
        <begin position="244"/>
        <end position="247"/>
    </location>
</feature>
<feature type="strand" evidence="11">
    <location>
        <begin position="249"/>
        <end position="251"/>
    </location>
</feature>
<feature type="helix" evidence="11">
    <location>
        <begin position="252"/>
        <end position="260"/>
    </location>
</feature>
<feature type="helix" evidence="11">
    <location>
        <begin position="265"/>
        <end position="279"/>
    </location>
</feature>
<feature type="strand" evidence="11">
    <location>
        <begin position="282"/>
        <end position="285"/>
    </location>
</feature>
<feature type="helix" evidence="11">
    <location>
        <begin position="310"/>
        <end position="325"/>
    </location>
</feature>
<feature type="strand" evidence="13">
    <location>
        <begin position="328"/>
        <end position="330"/>
    </location>
</feature>
<feature type="helix" evidence="11">
    <location>
        <begin position="336"/>
        <end position="338"/>
    </location>
</feature>
<feature type="helix" evidence="11">
    <location>
        <begin position="341"/>
        <end position="352"/>
    </location>
</feature>
<feature type="helix" evidence="11">
    <location>
        <begin position="357"/>
        <end position="359"/>
    </location>
</feature>
<feature type="strand" evidence="11">
    <location>
        <begin position="375"/>
        <end position="379"/>
    </location>
</feature>
<feature type="strand" evidence="11">
    <location>
        <begin position="382"/>
        <end position="390"/>
    </location>
</feature>
<feature type="helix" evidence="11">
    <location>
        <begin position="395"/>
        <end position="419"/>
    </location>
</feature>
<feature type="helix" evidence="11">
    <location>
        <begin position="425"/>
        <end position="439"/>
    </location>
</feature>
<feature type="turn" evidence="11">
    <location>
        <begin position="442"/>
        <end position="444"/>
    </location>
</feature>
<feature type="helix" evidence="11">
    <location>
        <begin position="445"/>
        <end position="450"/>
    </location>
</feature>
<feature type="strand" evidence="12">
    <location>
        <begin position="451"/>
        <end position="453"/>
    </location>
</feature>
<feature type="helix" evidence="11">
    <location>
        <begin position="454"/>
        <end position="456"/>
    </location>
</feature>
<feature type="turn" evidence="11">
    <location>
        <begin position="457"/>
        <end position="459"/>
    </location>
</feature>
<feature type="helix" evidence="11">
    <location>
        <begin position="465"/>
        <end position="469"/>
    </location>
</feature>
<feature type="helix" evidence="11">
    <location>
        <begin position="472"/>
        <end position="483"/>
    </location>
</feature>
<feature type="helix" evidence="11">
    <location>
        <begin position="496"/>
        <end position="499"/>
    </location>
</feature>
<feature type="helix" evidence="11">
    <location>
        <begin position="500"/>
        <end position="502"/>
    </location>
</feature>
<feature type="helix" evidence="11">
    <location>
        <begin position="506"/>
        <end position="508"/>
    </location>
</feature>
<feature type="strand" evidence="12">
    <location>
        <begin position="512"/>
        <end position="514"/>
    </location>
</feature>
<feature type="helix" evidence="11">
    <location>
        <begin position="515"/>
        <end position="517"/>
    </location>
</feature>
<feature type="helix" evidence="11">
    <location>
        <begin position="525"/>
        <end position="540"/>
    </location>
</feature>
<feature type="turn" evidence="13">
    <location>
        <begin position="546"/>
        <end position="549"/>
    </location>
</feature>
<feature type="helix" evidence="13">
    <location>
        <begin position="560"/>
        <end position="568"/>
    </location>
</feature>
<feature type="strand" evidence="13">
    <location>
        <begin position="577"/>
        <end position="584"/>
    </location>
</feature>
<feature type="helix" evidence="13">
    <location>
        <begin position="589"/>
        <end position="601"/>
    </location>
</feature>
<feature type="strand" evidence="13">
    <location>
        <begin position="604"/>
        <end position="610"/>
    </location>
</feature>
<feature type="strand" evidence="13">
    <location>
        <begin position="618"/>
        <end position="623"/>
    </location>
</feature>
<feature type="turn" evidence="13">
    <location>
        <begin position="624"/>
        <end position="627"/>
    </location>
</feature>
<feature type="strand" evidence="13">
    <location>
        <begin position="628"/>
        <end position="633"/>
    </location>
</feature>
<feature type="helix" evidence="13">
    <location>
        <begin position="639"/>
        <end position="641"/>
    </location>
</feature>
<feature type="strand" evidence="13">
    <location>
        <begin position="645"/>
        <end position="655"/>
    </location>
</feature>
<feature type="strand" evidence="12">
    <location>
        <begin position="657"/>
        <end position="660"/>
    </location>
</feature>
<feature type="strand" evidence="12">
    <location>
        <begin position="664"/>
        <end position="666"/>
    </location>
</feature>
<feature type="helix" evidence="13">
    <location>
        <begin position="669"/>
        <end position="683"/>
    </location>
</feature>
<feature type="turn" evidence="13">
    <location>
        <begin position="684"/>
        <end position="686"/>
    </location>
</feature>
<feature type="strand" evidence="13">
    <location>
        <begin position="690"/>
        <end position="699"/>
    </location>
</feature>
<feature type="strand" evidence="13">
    <location>
        <begin position="705"/>
        <end position="707"/>
    </location>
</feature>
<feature type="helix" evidence="13">
    <location>
        <begin position="708"/>
        <end position="710"/>
    </location>
</feature>
<feature type="helix" evidence="13">
    <location>
        <begin position="712"/>
        <end position="727"/>
    </location>
</feature>
<feature type="strand" evidence="12">
    <location>
        <begin position="729"/>
        <end position="731"/>
    </location>
</feature>
<feature type="helix" evidence="13">
    <location>
        <begin position="733"/>
        <end position="735"/>
    </location>
</feature>
<feature type="strand" evidence="13">
    <location>
        <begin position="736"/>
        <end position="742"/>
    </location>
</feature>
<feature type="strand" evidence="13">
    <location>
        <begin position="745"/>
        <end position="747"/>
    </location>
</feature>
<feature type="strand" evidence="13">
    <location>
        <begin position="749"/>
        <end position="751"/>
    </location>
</feature>
<feature type="strand" evidence="13">
    <location>
        <begin position="753"/>
        <end position="756"/>
    </location>
</feature>
<feature type="strand" evidence="13">
    <location>
        <begin position="760"/>
        <end position="763"/>
    </location>
</feature>
<feature type="helix" evidence="13">
    <location>
        <begin position="766"/>
        <end position="775"/>
    </location>
</feature>
<feature type="strand" evidence="13">
    <location>
        <begin position="778"/>
        <end position="782"/>
    </location>
</feature>
<feature type="turn" evidence="13">
    <location>
        <begin position="783"/>
        <end position="786"/>
    </location>
</feature>
<feature type="strand" evidence="13">
    <location>
        <begin position="787"/>
        <end position="790"/>
    </location>
</feature>
<feature type="helix" evidence="13">
    <location>
        <begin position="795"/>
        <end position="809"/>
    </location>
</feature>
<feature type="helix" evidence="13">
    <location>
        <begin position="816"/>
        <end position="838"/>
    </location>
</feature>
<feature type="helix" evidence="13">
    <location>
        <begin position="851"/>
        <end position="876"/>
    </location>
</feature>
<feature type="strand" evidence="13">
    <location>
        <begin position="894"/>
        <end position="903"/>
    </location>
</feature>
<feature type="turn" evidence="13">
    <location>
        <begin position="904"/>
        <end position="906"/>
    </location>
</feature>
<feature type="strand" evidence="13">
    <location>
        <begin position="909"/>
        <end position="914"/>
    </location>
</feature>
<feature type="helix" evidence="13">
    <location>
        <begin position="918"/>
        <end position="934"/>
    </location>
</feature>
<feature type="strand" evidence="13">
    <location>
        <begin position="937"/>
        <end position="941"/>
    </location>
</feature>
<feature type="strand" evidence="13">
    <location>
        <begin position="944"/>
        <end position="947"/>
    </location>
</feature>
<feature type="helix" evidence="13">
    <location>
        <begin position="959"/>
        <end position="970"/>
    </location>
</feature>
<feature type="strand" evidence="12">
    <location>
        <begin position="974"/>
        <end position="976"/>
    </location>
</feature>
<feature type="helix" evidence="13">
    <location>
        <begin position="982"/>
        <end position="993"/>
    </location>
</feature>
<feature type="strand" evidence="12">
    <location>
        <begin position="999"/>
        <end position="1001"/>
    </location>
</feature>
<feature type="helix" evidence="13">
    <location>
        <begin position="1005"/>
        <end position="1017"/>
    </location>
</feature>
<feature type="strand" evidence="12">
    <location>
        <begin position="1038"/>
        <end position="1042"/>
    </location>
</feature>
<feature type="strand" evidence="12">
    <location>
        <begin position="1052"/>
        <end position="1054"/>
    </location>
</feature>
<feature type="helix" evidence="13">
    <location>
        <begin position="1055"/>
        <end position="1068"/>
    </location>
</feature>
<feature type="helix" evidence="13">
    <location>
        <begin position="1071"/>
        <end position="1076"/>
    </location>
</feature>
<feature type="turn" evidence="12">
    <location>
        <begin position="1100"/>
        <end position="1102"/>
    </location>
</feature>
<feature type="strand" evidence="12">
    <location>
        <begin position="1108"/>
        <end position="1111"/>
    </location>
</feature>
<feature type="helix" evidence="12">
    <location>
        <begin position="1118"/>
        <end position="1133"/>
    </location>
</feature>
<feature type="turn" evidence="12">
    <location>
        <begin position="1141"/>
        <end position="1143"/>
    </location>
</feature>
<feature type="strand" evidence="12">
    <location>
        <begin position="1155"/>
        <end position="1157"/>
    </location>
</feature>
<feature type="turn" evidence="12">
    <location>
        <begin position="1158"/>
        <end position="1161"/>
    </location>
</feature>
<feature type="strand" evidence="12">
    <location>
        <begin position="1168"/>
        <end position="1170"/>
    </location>
</feature>
<feature type="strand" evidence="12">
    <location>
        <begin position="1196"/>
        <end position="1198"/>
    </location>
</feature>
<feature type="strand" evidence="12">
    <location>
        <begin position="1228"/>
        <end position="1237"/>
    </location>
</feature>
<feature type="helix" evidence="12">
    <location>
        <begin position="1247"/>
        <end position="1258"/>
    </location>
</feature>
<feature type="turn" evidence="12">
    <location>
        <begin position="1259"/>
        <end position="1261"/>
    </location>
</feature>
<feature type="strand" evidence="12">
    <location>
        <begin position="1270"/>
        <end position="1281"/>
    </location>
</feature>
<feature type="strand" evidence="12">
    <location>
        <begin position="1289"/>
        <end position="1291"/>
    </location>
</feature>
<feature type="helix" evidence="12">
    <location>
        <begin position="1307"/>
        <end position="1311"/>
    </location>
</feature>
<feature type="strand" evidence="12">
    <location>
        <begin position="1314"/>
        <end position="1318"/>
    </location>
</feature>
<feature type="strand" evidence="12">
    <location>
        <begin position="1321"/>
        <end position="1327"/>
    </location>
</feature>
<feature type="strand" evidence="12">
    <location>
        <begin position="1334"/>
        <end position="1338"/>
    </location>
</feature>
<feature type="strand" evidence="13">
    <location>
        <begin position="1344"/>
        <end position="1346"/>
    </location>
</feature>
<feature type="helix" evidence="13">
    <location>
        <begin position="1349"/>
        <end position="1352"/>
    </location>
</feature>
<feature type="strand" evidence="12">
    <location>
        <begin position="1356"/>
        <end position="1359"/>
    </location>
</feature>
<feature type="strand" evidence="12">
    <location>
        <begin position="1362"/>
        <end position="1365"/>
    </location>
</feature>
<feature type="strand" evidence="12">
    <location>
        <begin position="1375"/>
        <end position="1378"/>
    </location>
</feature>
<feature type="strand" evidence="13">
    <location>
        <begin position="1385"/>
        <end position="1387"/>
    </location>
</feature>
<feature type="strand" evidence="12">
    <location>
        <begin position="1391"/>
        <end position="1394"/>
    </location>
</feature>
<feature type="turn" evidence="12">
    <location>
        <begin position="1398"/>
        <end position="1400"/>
    </location>
</feature>
<feature type="strand" evidence="13">
    <location>
        <begin position="1404"/>
        <end position="1408"/>
    </location>
</feature>
<feature type="strand" evidence="13">
    <location>
        <begin position="1410"/>
        <end position="1420"/>
    </location>
</feature>
<feature type="turn" evidence="13">
    <location>
        <begin position="1421"/>
        <end position="1424"/>
    </location>
</feature>
<feature type="strand" evidence="13">
    <location>
        <begin position="1425"/>
        <end position="1432"/>
    </location>
</feature>
<feature type="helix" evidence="13">
    <location>
        <begin position="1434"/>
        <end position="1439"/>
    </location>
</feature>
<feature type="helix" evidence="13">
    <location>
        <begin position="1441"/>
        <end position="1451"/>
    </location>
</feature>
<feature type="turn" evidence="13">
    <location>
        <begin position="1455"/>
        <end position="1457"/>
    </location>
</feature>
<feature type="strand" evidence="13">
    <location>
        <begin position="1459"/>
        <end position="1466"/>
    </location>
</feature>
<feature type="strand" evidence="13">
    <location>
        <begin position="1471"/>
        <end position="1480"/>
    </location>
</feature>
<feature type="strand" evidence="13">
    <location>
        <begin position="1482"/>
        <end position="1488"/>
    </location>
</feature>
<feature type="strand" evidence="13">
    <location>
        <begin position="1493"/>
        <end position="1499"/>
    </location>
</feature>
<feature type="strand" evidence="13">
    <location>
        <begin position="1502"/>
        <end position="1504"/>
    </location>
</feature>
<feature type="strand" evidence="13">
    <location>
        <begin position="1507"/>
        <end position="1513"/>
    </location>
</feature>
<feature type="strand" evidence="13">
    <location>
        <begin position="1515"/>
        <end position="1524"/>
    </location>
</feature>
<feature type="strand" evidence="13">
    <location>
        <begin position="1526"/>
        <end position="1534"/>
    </location>
</feature>
<feature type="strand" evidence="13">
    <location>
        <begin position="1537"/>
        <end position="1545"/>
    </location>
</feature>
<feature type="strand" evidence="13">
    <location>
        <begin position="1547"/>
        <end position="1558"/>
    </location>
</feature>
<feature type="helix" evidence="13">
    <location>
        <begin position="1560"/>
        <end position="1573"/>
    </location>
</feature>
<feature type="helix" evidence="13">
    <location>
        <begin position="1581"/>
        <end position="1588"/>
    </location>
</feature>
<feature type="turn" evidence="13">
    <location>
        <begin position="1592"/>
        <end position="1594"/>
    </location>
</feature>
<feature type="strand" evidence="13">
    <location>
        <begin position="1595"/>
        <end position="1600"/>
    </location>
</feature>
<feature type="strand" evidence="13">
    <location>
        <begin position="1604"/>
        <end position="1616"/>
    </location>
</feature>
<feature type="strand" evidence="13">
    <location>
        <begin position="1618"/>
        <end position="1626"/>
    </location>
</feature>
<feature type="strand" evidence="13">
    <location>
        <begin position="1632"/>
        <end position="1641"/>
    </location>
</feature>
<feature type="strand" evidence="13">
    <location>
        <begin position="1644"/>
        <end position="1649"/>
    </location>
</feature>
<feature type="helix" evidence="13">
    <location>
        <begin position="1650"/>
        <end position="1652"/>
    </location>
</feature>
<feature type="strand" evidence="13">
    <location>
        <begin position="1656"/>
        <end position="1660"/>
    </location>
</feature>
<feature type="strand" evidence="13">
    <location>
        <begin position="1668"/>
        <end position="1671"/>
    </location>
</feature>
<feature type="strand" evidence="13">
    <location>
        <begin position="1674"/>
        <end position="1678"/>
    </location>
</feature>
<feature type="helix" evidence="13">
    <location>
        <begin position="1679"/>
        <end position="1682"/>
    </location>
</feature>
<feature type="strand" evidence="13">
    <location>
        <begin position="1683"/>
        <end position="1685"/>
    </location>
</feature>
<feature type="helix" evidence="13">
    <location>
        <begin position="1686"/>
        <end position="1688"/>
    </location>
</feature>
<feature type="strand" evidence="13">
    <location>
        <begin position="1691"/>
        <end position="1694"/>
    </location>
</feature>
<feature type="strand" evidence="13">
    <location>
        <begin position="1702"/>
        <end position="1706"/>
    </location>
</feature>
<feature type="strand" evidence="13">
    <location>
        <begin position="1717"/>
        <end position="1720"/>
    </location>
</feature>
<feature type="strand" evidence="13">
    <location>
        <begin position="1726"/>
        <end position="1728"/>
    </location>
</feature>
<feature type="strand" evidence="13">
    <location>
        <begin position="1730"/>
        <end position="1736"/>
    </location>
</feature>
<feature type="helix" evidence="13">
    <location>
        <begin position="1738"/>
        <end position="1740"/>
    </location>
</feature>
<feature type="strand" evidence="13">
    <location>
        <begin position="1741"/>
        <end position="1746"/>
    </location>
</feature>
<feature type="strand" evidence="13">
    <location>
        <begin position="1749"/>
        <end position="1755"/>
    </location>
</feature>
<feature type="strand" evidence="13">
    <location>
        <begin position="1765"/>
        <end position="1768"/>
    </location>
</feature>
<feature type="strand" evidence="13">
    <location>
        <begin position="1771"/>
        <end position="1773"/>
    </location>
</feature>
<feature type="helix" evidence="13">
    <location>
        <begin position="1778"/>
        <end position="1780"/>
    </location>
</feature>
<feature type="strand" evidence="13">
    <location>
        <begin position="1781"/>
        <end position="1784"/>
    </location>
</feature>
<feature type="helix" evidence="13">
    <location>
        <begin position="1793"/>
        <end position="1799"/>
    </location>
</feature>
<feature type="strand" evidence="13">
    <location>
        <begin position="1807"/>
        <end position="1809"/>
    </location>
</feature>
<feature type="strand" evidence="13">
    <location>
        <begin position="1815"/>
        <end position="1819"/>
    </location>
</feature>
<feature type="strand" evidence="13">
    <location>
        <begin position="1822"/>
        <end position="1826"/>
    </location>
</feature>
<feature type="strand" evidence="13">
    <location>
        <begin position="1835"/>
        <end position="1839"/>
    </location>
</feature>
<feature type="strand" evidence="13">
    <location>
        <begin position="1842"/>
        <end position="1846"/>
    </location>
</feature>
<feature type="turn" evidence="13">
    <location>
        <begin position="1848"/>
        <end position="1850"/>
    </location>
</feature>
<feature type="strand" evidence="13">
    <location>
        <begin position="1856"/>
        <end position="1860"/>
    </location>
</feature>
<feature type="strand" evidence="13">
    <location>
        <begin position="1863"/>
        <end position="1868"/>
    </location>
</feature>
<feature type="turn" evidence="13">
    <location>
        <begin position="1869"/>
        <end position="1872"/>
    </location>
</feature>
<feature type="strand" evidence="13">
    <location>
        <begin position="1873"/>
        <end position="1875"/>
    </location>
</feature>
<feature type="strand" evidence="13">
    <location>
        <begin position="1878"/>
        <end position="1882"/>
    </location>
</feature>
<feature type="strand" evidence="13">
    <location>
        <begin position="1885"/>
        <end position="1889"/>
    </location>
</feature>
<feature type="strand" evidence="12">
    <location>
        <begin position="1891"/>
        <end position="1893"/>
    </location>
</feature>
<feature type="strand" evidence="13">
    <location>
        <begin position="1898"/>
        <end position="1902"/>
    </location>
</feature>
<feature type="strand" evidence="13">
    <location>
        <begin position="1905"/>
        <end position="1909"/>
    </location>
</feature>
<feature type="strand" evidence="12">
    <location>
        <begin position="1912"/>
        <end position="1917"/>
    </location>
</feature>
<feature type="strand" evidence="13">
    <location>
        <begin position="1928"/>
        <end position="1932"/>
    </location>
</feature>
<feature type="strand" evidence="13">
    <location>
        <begin position="1935"/>
        <end position="1939"/>
    </location>
</feature>
<feature type="turn" evidence="12">
    <location>
        <begin position="1961"/>
        <end position="1963"/>
    </location>
</feature>
<feature type="strand" evidence="12">
    <location>
        <begin position="1969"/>
        <end position="1972"/>
    </location>
</feature>
<feature type="strand" evidence="12">
    <location>
        <begin position="1974"/>
        <end position="1980"/>
    </location>
</feature>
<feature type="strand" evidence="12">
    <location>
        <begin position="1992"/>
        <end position="1997"/>
    </location>
</feature>
<feature type="strand" evidence="12">
    <location>
        <begin position="2009"/>
        <end position="2013"/>
    </location>
</feature>
<feature type="strand" evidence="12">
    <location>
        <begin position="2016"/>
        <end position="2018"/>
    </location>
</feature>
<feature type="strand" evidence="12">
    <location>
        <begin position="2030"/>
        <end position="2032"/>
    </location>
</feature>
<feature type="strand" evidence="12">
    <location>
        <begin position="2034"/>
        <end position="2041"/>
    </location>
</feature>
<feature type="strand" evidence="12">
    <location>
        <begin position="2059"/>
        <end position="2063"/>
    </location>
</feature>
<feature type="strand" evidence="12">
    <location>
        <begin position="2066"/>
        <end position="2070"/>
    </location>
</feature>
<feature type="strand" evidence="12">
    <location>
        <begin position="2074"/>
        <end position="2076"/>
    </location>
</feature>
<feature type="strand" evidence="12">
    <location>
        <begin position="2081"/>
        <end position="2083"/>
    </location>
</feature>
<feature type="strand" evidence="12">
    <location>
        <begin position="2086"/>
        <end position="2089"/>
    </location>
</feature>
<feature type="turn" evidence="12">
    <location>
        <begin position="2093"/>
        <end position="2095"/>
    </location>
</feature>
<feature type="turn" evidence="12">
    <location>
        <begin position="2154"/>
        <end position="2156"/>
    </location>
</feature>
<feature type="turn" evidence="12">
    <location>
        <begin position="2175"/>
        <end position="2178"/>
    </location>
</feature>
<feature type="strand" evidence="12">
    <location>
        <begin position="2204"/>
        <end position="2208"/>
    </location>
</feature>
<feature type="strand" evidence="12">
    <location>
        <begin position="2217"/>
        <end position="2219"/>
    </location>
</feature>
<feature type="strand" evidence="12">
    <location>
        <begin position="2234"/>
        <end position="2239"/>
    </location>
</feature>
<feature type="strand" evidence="12">
    <location>
        <begin position="2242"/>
        <end position="2246"/>
    </location>
</feature>
<feature type="strand" evidence="12">
    <location>
        <begin position="2248"/>
        <end position="2250"/>
    </location>
</feature>
<feature type="strand" evidence="12">
    <location>
        <begin position="2295"/>
        <end position="2299"/>
    </location>
</feature>
<feature type="strand" evidence="12">
    <location>
        <begin position="2302"/>
        <end position="2307"/>
    </location>
</feature>
<feature type="strand" evidence="12">
    <location>
        <begin position="2311"/>
        <end position="2314"/>
    </location>
</feature>
<feature type="strand" evidence="12">
    <location>
        <begin position="2327"/>
        <end position="2331"/>
    </location>
</feature>
<feature type="strand" evidence="12">
    <location>
        <begin position="2345"/>
        <end position="2349"/>
    </location>
</feature>
<feature type="strand" evidence="12">
    <location>
        <begin position="2352"/>
        <end position="2356"/>
    </location>
</feature>
<feature type="turn" evidence="12">
    <location>
        <begin position="2358"/>
        <end position="2360"/>
    </location>
</feature>
<gene>
    <name evidence="8" type="primary">tcdB</name>
    <name evidence="2" type="synonym">toxB</name>
</gene>
<accession>Q9EXR0</accession>
<accession>Q2PDK4</accession>
<protein>
    <recommendedName>
        <fullName evidence="8">Toxin B</fullName>
        <ecNumber evidence="2">3.4.22.-</ecNumber>
    </recommendedName>
    <component>
        <recommendedName>
            <fullName evidence="9">Glucosyltransferase TcdB</fullName>
            <ecNumber evidence="2">2.4.1.-</ecNumber>
        </recommendedName>
    </component>
</protein>
<name>TCDB2_CLODI</name>
<sequence>MSLVNRKQLEKMANVRFRVQEDEYVAILDALEEYHNMSENTVVEKYLKLKDINSLTDTYIDTYKKSGRNKALKKFKEYLVTEILELKNSNLTPVEKNLHFIWIGGQINDTAINYINQWKDVNSDYNVNVFYDSNAFLINTLKKTIIESASNDTLESFRENLNDPEFNHTAFFRKRMQIIYDKQQNFINYYKAQKEENPDLIIDDIVKTYLSNEYSKDIDELNAYIEESLNKVTENSGNDVRNFEEFKTGEVFNLYEQELVERWNLAGASDILRVAILKNIGGVYLDVDMLPGIHPDLFKDINKPDSVKTAVDWEEMQLEAIMKYKEYIPEYTSKHFDTLDEEVQSSFESVLASKSDKSEIFLPLGGIEVSPLEVKVAFAKGSIIDQALISAKDSYCSDLLIKQIQNRYKILNDTLGPIISQGNDFNTTMNNFGESLGAIANEENISFIAKIGSYLRVGFYPEANTTITLSGPTIYAGAYKDLLTFKEMSIDTSILSSELRNFEFPKVNISQATEQEKNSLWQFNEERAKIQFEEYKKNYFEGALGEDDNLDFSQNTVTDKEYLLEKISSSTKSSERGYVHYIVQLQGDKISYEAACNLFAKNPYDSILFQKNIEDSEVAYYYNPTDSEIQEIDKYRIPDRISDRPKIKLTLIGHGKAEFNTDIFAGLDVDSLSSEIETILDLAKADISPKSIEINLLGCNMFSYSVNVEETYPGKLLLRVKDKVSELMPSISQDSIIVSANQYEVRINSEGRRELLDHSGEWINKEESIIKDISSKEYISFNPKENKIIVKSKNLPELSTLLQEIRNNSNSSDIELEEKVMLAECEINVISNIETQVVEERIEEAKSLTSDSINYIKNEFKLIESISDALYDLKQQNELEESHFISFEDISKTDEGFSIRFIDKETGESIFVETEKAIFSEYANHITEEISKLKDTIFDTVNGKLVKKVTLDATHEVNTLNAAFFIQSLIGYNSSKESLSNLSVAMKVQVYAQLFSTGLNTITDAAKVVELVSTALDETIDLLPTLSEGLPVIATIIDGVSLGASIKELSETSDPLLRQEIEAKIGIMAVNLTAATTAIITSSLGIASGFSILLVPLAGISAGIPSLVNNELILRAEAKNVVDYFGHISLAESEGAFTLLDDKIMMPQDDLVISEIDFNNNSITLGKCEIWRMEGGSGHTVTDDIDHFFSAPSTTYREPYLSIYDVLDVKEEELDLSKDLMVLPNAPDRIFGWERGWTPGLRSLENDGTKLLDRIRDHYEGQFYWRFFAFIADSVITKLKPRYEDTNIRISLDSNTRSFIVPVITTEYIREKLSYSFYGSGGTYALSLSQYNMNINIELNENDTWVIDVDNVVRDVTIESDKIKKGDLIENILSKLSIEDNKIILDNHEINFSGTLNGGNGFVSLTFSILEGINAVIEVDLLSKSYKVLISGELKTLMANSNSVQQKIDYIGLNSELQKNIPYSFMDDEGKENGFINCFTKEGLFVSELSDVVLIIKVYMDNSKPPFGYYSNDLKDVKVITKDDVIIITGYYLKDDIKISLSFTIQDKNTIKLNGVYLDENGVAEILKFMNKKGSTNTSDSLMSFLESMNIKSIFIKSLKSNAKLILDTNFIISGTTFIGQFEFICDKDNNIQPYFIKFNTLETKYTLYVGNRQNMIVEPNYNLDDSGDISSTVINFSQKYLYGIDSCVNKVVISPGIYTDEINITPVHEANNTYPEVIVLDTNYISEKINININDLSIRYVWSNDGSDFILMSTDEENKVSQVKIRFTNVFKGNTISDKISFNFSDKQDISINKIISTFTPSYYVEGLLNYDLGLISLYNEKFYINNLGMMVSGLVYINDSLYYFKPPIKNLITGFTTIGDDKYYFNPDNGGPASVGETIIDGKNYYFSQNGVLQTGVFSTEDGFKYFAPADTLDENLEGEAIDFTGKLIIDENVYYFGDNYRAAIEWQTLDDEVYYFSTDTGRAFKGLNQIGDDKFYFNSDGIMQKGFVNINDKTFYFDDSGVMKSGYTEIDGRYFYFAENGEMQIGVFNTADGFKYFAHHDEDLGNEEGEALSYSGILNFNNKIYYFDDSFTAVVGWKDLEDGSKYYFDENTAEASIGISIINDGKYYFNDSGIMQIGFVTINNEVFYFSDSGIVESGMQNIDDNYFYISENGLVQIGVFDTSDGYKYFAPANTVNDNIYGQAVEYSGLVRVNEDVYSFGESYTIETGWIYDSENESDKYYFDPEAKKAYKGINVIDDIKYYFDENGIMRTGLITFEDNHYYFNEDGEMQYGYLNIEDKMFYFSEDGIMQIGVFNTPDGFKYFAHQNTLDENFEGESINYTGWLDLDEKRYYFTDEYIAATGSVIIDGEEYYFDPDTAQLVISE</sequence>
<comment type="function">
    <molecule>Toxin B</molecule>
    <text evidence="1 2">Precursor of a cytotoxin that targets and disrupts the colonic epithelium, inducing the host inflammatory and innate immune responses and resulting in diarrhea and pseudomembranous colitis. TcdB constitutes the main toxin that mediates the pathology of C.difficile infection, an opportunistic pathogen that colonizes the colon when the normal gut microbiome is disrupted. Compared to TcdA, TcdB is more virulent and more important for inducing the host inflammatory and innate immune responses. This form constitutes the precursor of the toxin: it enters into host cells and mediates autoprocessing to release the active toxin (Glucosyltransferase TcdB) into the host cytosol. Targets colonic epithelia by binding to the frizzled receptors FZD1, FZD2 and FZD7, and enters host cells via clathrin-mediated endocytosis. Frizzled receptors constitute the major host receptors in the colonic epithelium, but other receptors, such as CSPG4 or NECTIN3/PVRL3, have been identified (By similarity). Binding to carbohydrates and sulfated glycosaminoglycans on host cell surface also contribute to entry into cells (By similarity). Once entered into host cells, acidification in the endosome promotes the membrane insertion of the translocation region and formation of a pore, leading to translocation of the GT44 and peptidase C80 domains across the endosomal membrane. This activates the peptidase C80 domain and autocatalytic processing, releasing the N-terminal part (Glucosyltransferase TcdB), which constitutes the active part of the toxin, in the cytosol (By similarity).</text>
</comment>
<comment type="function">
    <molecule>Glucosyltransferase TcdB</molecule>
    <text evidence="2">Active form of the toxin, which is released into the host cytosol following autoprocessing and inactivates small GTPases. Acts by mediating monoglucosylation of small GTPases of the Rho family (Rac1, RhoA, RhoB, RhoC, RhoG and Cdc42) in host cells at the conserved threonine residue located in the switch I region ('Thr-37/35'), using UDP-alpha-D-glucose as the sugar donor. Monoglucosylation of host small GTPases completely prevents the recognition of the downstream effector, blocking the GTPases in their inactive form, leading to actin cytoskeleton disruption and cell death, resulting in the loss of colonic epithelial barrier function.</text>
</comment>
<comment type="catalytic activity">
    <molecule>Glucosyltransferase TcdB</molecule>
    <reaction evidence="2">
        <text>L-threonyl-[protein] + UDP-alpha-D-glucose = 3-O-(alpha-D-glucosyl)-L-threonyl-[protein] + UDP + H(+)</text>
        <dbReference type="Rhea" id="RHEA:64684"/>
        <dbReference type="Rhea" id="RHEA-COMP:11060"/>
        <dbReference type="Rhea" id="RHEA-COMP:16656"/>
        <dbReference type="ChEBI" id="CHEBI:15378"/>
        <dbReference type="ChEBI" id="CHEBI:30013"/>
        <dbReference type="ChEBI" id="CHEBI:58223"/>
        <dbReference type="ChEBI" id="CHEBI:58885"/>
        <dbReference type="ChEBI" id="CHEBI:156085"/>
    </reaction>
    <physiologicalReaction direction="left-to-right" evidence="2">
        <dbReference type="Rhea" id="RHEA:64685"/>
    </physiologicalReaction>
</comment>
<comment type="cofactor">
    <molecule>Toxin B</molecule>
    <cofactor evidence="2">
        <name>Zn(2+)</name>
        <dbReference type="ChEBI" id="CHEBI:29105"/>
    </cofactor>
    <text evidence="2">Binds 1 Zn(2+) ion per subunit. Zn(2+) is required for autocatalytic cleavage.</text>
</comment>
<comment type="cofactor">
    <molecule>Glucosyltransferase TcdB</molecule>
    <cofactor evidence="2">
        <name>Mn(2+)</name>
        <dbReference type="ChEBI" id="CHEBI:29035"/>
    </cofactor>
    <cofactor evidence="2">
        <name>Mg(2+)</name>
        <dbReference type="ChEBI" id="CHEBI:18420"/>
    </cofactor>
    <text evidence="2">Has higher activity with Mn(2+), but most likely uses Mg(2+) in host cells. Mn(2+) or Mg(2+) are required for glucosyltransferase activity.</text>
</comment>
<comment type="activity regulation">
    <molecule>Toxin B</molecule>
    <text evidence="2">Protease activity is activated upon binding to 1D-myo-inositol hexakisphosphate (InsP6), which induces conformational reorganization.</text>
</comment>
<comment type="subunit">
    <molecule>Toxin B</molecule>
    <text evidence="2">Interacts with host FZD1. Interacts with host FZD2; interaction promotes toxin entry into host cell and occupies the binding site for Wnt-adducted palmitoleate in FZD2, leading to prevent Wnt-binding and downstream Wnt signaling. Interacts with host FZD7. Interacts with host CSPG4. Interacts with host NECTIN3/PVRL3.</text>
</comment>
<comment type="subcellular location">
    <molecule>Toxin B</molecule>
    <subcellularLocation>
        <location evidence="2">Secreted</location>
    </subcellularLocation>
    <subcellularLocation>
        <location evidence="2">Host endosome membrane</location>
    </subcellularLocation>
    <text evidence="2">Secreted from C.difficile cell into the extracellular environment via help of holin-like protein TcdE/UtxA. Binds to the cell surface receptors via the receptor-binding region and enters the cells via clathrin-mediated endocytosis. Acidification in the endosome triggers conformational changes that promote the membrane insertion of the translocation region, allowing formation of a pore, leading to translocation of the GT44 and peptidase C80 domains across the endosomal membrane. 1D-myo-inositol hexakisphosphate-binding (InsP6) activates the peptidase C80 domain and autoprocessing, generating the Glucosyltransferase TcdB form, which is released in the host cytosol.</text>
</comment>
<comment type="subcellular location">
    <molecule>Glucosyltransferase TcdB</molecule>
    <subcellularLocation>
        <location evidence="7">Host cytoplasm</location>
        <location evidence="7">Host cytosol</location>
    </subcellularLocation>
    <subcellularLocation>
        <location evidence="3">Host cell membrane</location>
        <topology evidence="3">Peripheral membrane protein</topology>
        <orientation evidence="3">Cytoplasmic side</orientation>
    </subcellularLocation>
    <text evidence="3">Binding to phospholipids, such as phosphatidylserine and phosphatidic acid promotes localization to the inner face of the cell membrane close to its membrane anchored substrates (small GTPases).</text>
</comment>
<comment type="domain">
    <molecule>Toxin B</molecule>
    <text evidence="2">Consists of 4 functional domains: (1) the N-terminal GT44 domain (glucosyltransferase, also named GTD), which mediates glucosylation of host small GTPases, (2) an autoprocessing region that catalyzes autoprocessing to release the N-terminal GT44 domain in the host cytosol, (3) the translocation region that forms a pore to promote translocation of the GT44 and peptidase C80 domains across the endosomal membrane and (4) the receptor-binding (CROPS) region that mediates binding to host cells and contribute to entry into cells.</text>
</comment>
<comment type="domain">
    <molecule>Toxin B</molecule>
    <text evidence="2">The receptor-binding (CROPS) region is dynamic and can have open and closed conformations depending of the pH: has an open conformation at endosomal pH and a closed conformation at neutral pH.</text>
</comment>
<comment type="domain">
    <molecule>Toxin B</molecule>
    <text evidence="1">The cell wall-binding repeats bind carbohydrates, probably contributing to entry into cells.</text>
</comment>
<comment type="domain">
    <molecule>Glucosyltransferase TcdB</molecule>
    <text evidence="2 3">The four-helical bundle region mediates binding to phospholipids, such as phosphatidylserine and phosphatidic acid (By similarity). This promotes localization to the inner face of the cell membrane close to small GTPases (By similarity).</text>
</comment>
<comment type="PTM">
    <molecule>Toxin B</molecule>
    <text evidence="2 7">Undergoes autocatalytic cleavage to release the N-terminal part (Glucosyltransferase TcdB), which constitutes the active part of the toxin, in the host cytosol (PubMed:15632438). 1D-myo-inositol hexakisphosphate-binding (InsP6) activates the peptidase C80 domain and promotes autoprocessing (By similarity).</text>
</comment>
<comment type="similarity">
    <text evidence="9">Belongs to the clostridial glucosylating toxin (LCGT) family.</text>
</comment>
<dbReference type="EC" id="3.4.22.-" evidence="2"/>
<dbReference type="EC" id="2.4.1.-" evidence="2"/>
<dbReference type="EMBL" id="AJ002558">
    <property type="protein sequence ID" value="CAC79962.1"/>
    <property type="molecule type" value="Genomic_DNA"/>
</dbReference>
<dbReference type="EMBL" id="AJ011301">
    <property type="protein sequence ID" value="CAC19891.1"/>
    <property type="molecule type" value="Genomic_DNA"/>
</dbReference>
<dbReference type="PIR" id="A27636">
    <property type="entry name" value="A27636"/>
</dbReference>
<dbReference type="PDB" id="7S0Z">
    <property type="method" value="X-ray"/>
    <property type="resolution" value="2.34 A"/>
    <property type="chains" value="A/B=1-541"/>
</dbReference>
<dbReference type="PDB" id="7V1N">
    <property type="method" value="EM"/>
    <property type="resolution" value="3.20 A"/>
    <property type="chains" value="A=1-2367"/>
</dbReference>
<dbReference type="PDB" id="8Y9C">
    <property type="method" value="EM"/>
    <property type="resolution" value="3.00 A"/>
    <property type="chains" value="B=1-2367"/>
</dbReference>
<dbReference type="PDBsum" id="7S0Z"/>
<dbReference type="PDBsum" id="7V1N"/>
<dbReference type="PDBsum" id="8Y9C"/>
<dbReference type="EMDB" id="EMD-31628"/>
<dbReference type="EMDB" id="EMD-39073"/>
<dbReference type="SMR" id="Q9EXR0"/>
<dbReference type="CAZy" id="GT44">
    <property type="family name" value="Glycosyltransferase Family 44"/>
</dbReference>
<dbReference type="GO" id="GO:0005576">
    <property type="term" value="C:extracellular region"/>
    <property type="evidence" value="ECO:0007669"/>
    <property type="project" value="UniProtKB-SubCell"/>
</dbReference>
<dbReference type="GO" id="GO:0044164">
    <property type="term" value="C:host cell cytosol"/>
    <property type="evidence" value="ECO:0007669"/>
    <property type="project" value="UniProtKB-SubCell"/>
</dbReference>
<dbReference type="GO" id="GO:0044175">
    <property type="term" value="C:host cell endosome membrane"/>
    <property type="evidence" value="ECO:0007669"/>
    <property type="project" value="UniProtKB-SubCell"/>
</dbReference>
<dbReference type="GO" id="GO:0020002">
    <property type="term" value="C:host cell plasma membrane"/>
    <property type="evidence" value="ECO:0007669"/>
    <property type="project" value="UniProtKB-SubCell"/>
</dbReference>
<dbReference type="GO" id="GO:0016020">
    <property type="term" value="C:membrane"/>
    <property type="evidence" value="ECO:0007669"/>
    <property type="project" value="UniProtKB-KW"/>
</dbReference>
<dbReference type="GO" id="GO:0008234">
    <property type="term" value="F:cysteine-type peptidase activity"/>
    <property type="evidence" value="ECO:0007669"/>
    <property type="project" value="UniProtKB-KW"/>
</dbReference>
<dbReference type="GO" id="GO:0016757">
    <property type="term" value="F:glycosyltransferase activity"/>
    <property type="evidence" value="ECO:0007669"/>
    <property type="project" value="UniProtKB-KW"/>
</dbReference>
<dbReference type="GO" id="GO:0008289">
    <property type="term" value="F:lipid binding"/>
    <property type="evidence" value="ECO:0007669"/>
    <property type="project" value="UniProtKB-KW"/>
</dbReference>
<dbReference type="GO" id="GO:0046872">
    <property type="term" value="F:metal ion binding"/>
    <property type="evidence" value="ECO:0007669"/>
    <property type="project" value="UniProtKB-KW"/>
</dbReference>
<dbReference type="GO" id="GO:0090729">
    <property type="term" value="F:toxin activity"/>
    <property type="evidence" value="ECO:0007669"/>
    <property type="project" value="UniProtKB-KW"/>
</dbReference>
<dbReference type="GO" id="GO:0006508">
    <property type="term" value="P:proteolysis"/>
    <property type="evidence" value="ECO:0007669"/>
    <property type="project" value="UniProtKB-KW"/>
</dbReference>
<dbReference type="CDD" id="cd20502">
    <property type="entry name" value="C80_toxinA_B-like"/>
    <property type="match status" value="1"/>
</dbReference>
<dbReference type="CDD" id="cd21058">
    <property type="entry name" value="toxin_MLD_like"/>
    <property type="match status" value="1"/>
</dbReference>
<dbReference type="Gene3D" id="1.10.10.1780">
    <property type="match status" value="1"/>
</dbReference>
<dbReference type="Gene3D" id="1.10.274.80">
    <property type="match status" value="1"/>
</dbReference>
<dbReference type="Gene3D" id="1.10.3730.30">
    <property type="match status" value="1"/>
</dbReference>
<dbReference type="Gene3D" id="1.20.58.1190">
    <property type="match status" value="1"/>
</dbReference>
<dbReference type="Gene3D" id="3.40.50.11050">
    <property type="match status" value="1"/>
</dbReference>
<dbReference type="Gene3D" id="2.10.270.10">
    <property type="entry name" value="Cholin Binding"/>
    <property type="match status" value="6"/>
</dbReference>
<dbReference type="InterPro" id="IPR018337">
    <property type="entry name" value="Cell_wall/Cho-bd_repeat"/>
</dbReference>
<dbReference type="InterPro" id="IPR020974">
    <property type="entry name" value="CPD_dom"/>
</dbReference>
<dbReference type="InterPro" id="IPR038383">
    <property type="entry name" value="CPD_dom_sf"/>
</dbReference>
<dbReference type="InterPro" id="IPR020972">
    <property type="entry name" value="Dermonecrotic/RTX_toxin_MLD"/>
</dbReference>
<dbReference type="InterPro" id="IPR029044">
    <property type="entry name" value="Nucleotide-diphossugar_trans"/>
</dbReference>
<dbReference type="InterPro" id="IPR024770">
    <property type="entry name" value="TcdA/TcdB_cat"/>
</dbReference>
<dbReference type="InterPro" id="IPR024772">
    <property type="entry name" value="TcdA/TcdB_N"/>
</dbReference>
<dbReference type="InterPro" id="IPR024769">
    <property type="entry name" value="TcdA/TcdB_pore_forming"/>
</dbReference>
<dbReference type="Pfam" id="PF01473">
    <property type="entry name" value="Choline_bind_1"/>
    <property type="match status" value="5"/>
</dbReference>
<dbReference type="Pfam" id="PF19127">
    <property type="entry name" value="Choline_bind_3"/>
    <property type="match status" value="1"/>
</dbReference>
<dbReference type="Pfam" id="PF11647">
    <property type="entry name" value="MLD"/>
    <property type="match status" value="1"/>
</dbReference>
<dbReference type="Pfam" id="PF11713">
    <property type="entry name" value="Peptidase_C80"/>
    <property type="match status" value="1"/>
</dbReference>
<dbReference type="Pfam" id="PF12919">
    <property type="entry name" value="TcdA_TcdB"/>
    <property type="match status" value="1"/>
</dbReference>
<dbReference type="Pfam" id="PF12920">
    <property type="entry name" value="TcdA_TcdB_pore"/>
    <property type="match status" value="1"/>
</dbReference>
<dbReference type="Pfam" id="PF12918">
    <property type="entry name" value="TcdB_N"/>
    <property type="match status" value="1"/>
</dbReference>
<dbReference type="SUPFAM" id="SSF69360">
    <property type="entry name" value="Cell wall binding repeat"/>
    <property type="match status" value="3"/>
</dbReference>
<dbReference type="SUPFAM" id="SSF53448">
    <property type="entry name" value="Nucleotide-diphospho-sugar transferases"/>
    <property type="match status" value="1"/>
</dbReference>
<dbReference type="PROSITE" id="PS51771">
    <property type="entry name" value="CGT_MARTX_CPD"/>
    <property type="match status" value="1"/>
</dbReference>
<dbReference type="PROSITE" id="PS51170">
    <property type="entry name" value="CW"/>
    <property type="match status" value="19"/>
</dbReference>
<proteinExistence type="evidence at protein level"/>
<evidence type="ECO:0000250" key="1">
    <source>
        <dbReference type="UniProtKB" id="P16154"/>
    </source>
</evidence>
<evidence type="ECO:0000250" key="2">
    <source>
        <dbReference type="UniProtKB" id="P18177"/>
    </source>
</evidence>
<evidence type="ECO:0000250" key="3">
    <source>
        <dbReference type="UniProtKB" id="Q46342"/>
    </source>
</evidence>
<evidence type="ECO:0000255" key="4"/>
<evidence type="ECO:0000255" key="5">
    <source>
        <dbReference type="PROSITE-ProRule" id="PRU00591"/>
    </source>
</evidence>
<evidence type="ECO:0000255" key="6">
    <source>
        <dbReference type="PROSITE-ProRule" id="PRU01107"/>
    </source>
</evidence>
<evidence type="ECO:0000269" key="7">
    <source>
    </source>
</evidence>
<evidence type="ECO:0000303" key="8">
    <source>
    </source>
</evidence>
<evidence type="ECO:0000305" key="9"/>
<evidence type="ECO:0000305" key="10">
    <source>
    </source>
</evidence>
<evidence type="ECO:0007829" key="11">
    <source>
        <dbReference type="PDB" id="7S0Z"/>
    </source>
</evidence>
<evidence type="ECO:0007829" key="12">
    <source>
        <dbReference type="PDB" id="7V1N"/>
    </source>
</evidence>
<evidence type="ECO:0007829" key="13">
    <source>
        <dbReference type="PDB" id="8Y9C"/>
    </source>
</evidence>
<reference key="1">
    <citation type="journal article" date="2005" name="Microbiology">
        <title>Characterization of the cleavage site and function of resulting cleavage fragments after limited proteolysis of Clostridium difficile toxin B (TcdB) by host cells.</title>
        <authorList>
            <person name="Rupnik M."/>
            <person name="Pabst S."/>
            <person name="Rupnik M."/>
            <person name="von Eichel-Streiber C."/>
            <person name="Urlaub H."/>
            <person name="Soeling H.D."/>
        </authorList>
    </citation>
    <scope>NUCLEOTIDE SEQUENCE [GENOMIC DNA]</scope>
    <scope>PROTEIN SEQUENCE OF 2-11 AND 545-554</scope>
    <scope>SUBCELLULAR LOCATION (GLUCOSYLTRANSFERASE TCDB)</scope>
    <scope>PROTEOLYTIC CLEAVAGE</scope>
    <source>
        <strain>8864</strain>
    </source>
</reference>